<dbReference type="EMBL" id="D83711">
    <property type="protein sequence ID" value="BAA23159.1"/>
    <property type="molecule type" value="mRNA"/>
</dbReference>
<dbReference type="PIR" id="T02017">
    <property type="entry name" value="T02017"/>
</dbReference>
<dbReference type="RefSeq" id="NP_001312103.1">
    <property type="nucleotide sequence ID" value="NM_001325174.1"/>
</dbReference>
<dbReference type="SMR" id="O23826"/>
<dbReference type="STRING" id="4097.O23826"/>
<dbReference type="PaxDb" id="4097-O23826"/>
<dbReference type="GeneID" id="107774014"/>
<dbReference type="KEGG" id="nta:107774014"/>
<dbReference type="OrthoDB" id="3176171at2759"/>
<dbReference type="Proteomes" id="UP000084051">
    <property type="component" value="Unplaced"/>
</dbReference>
<dbReference type="GO" id="GO:0005737">
    <property type="term" value="C:cytoplasm"/>
    <property type="evidence" value="ECO:0007669"/>
    <property type="project" value="UniProtKB-SubCell"/>
</dbReference>
<dbReference type="GO" id="GO:0072686">
    <property type="term" value="C:mitotic spindle"/>
    <property type="evidence" value="ECO:0000318"/>
    <property type="project" value="GO_Central"/>
</dbReference>
<dbReference type="GO" id="GO:0005876">
    <property type="term" value="C:spindle microtubule"/>
    <property type="evidence" value="ECO:0000318"/>
    <property type="project" value="GO_Central"/>
</dbReference>
<dbReference type="GO" id="GO:0005524">
    <property type="term" value="F:ATP binding"/>
    <property type="evidence" value="ECO:0007669"/>
    <property type="project" value="UniProtKB-KW"/>
</dbReference>
<dbReference type="GO" id="GO:0008017">
    <property type="term" value="F:microtubule binding"/>
    <property type="evidence" value="ECO:0007669"/>
    <property type="project" value="InterPro"/>
</dbReference>
<dbReference type="GO" id="GO:0008574">
    <property type="term" value="F:plus-end-directed microtubule motor activity"/>
    <property type="evidence" value="ECO:0000318"/>
    <property type="project" value="GO_Central"/>
</dbReference>
<dbReference type="GO" id="GO:0007018">
    <property type="term" value="P:microtubule-based movement"/>
    <property type="evidence" value="ECO:0007669"/>
    <property type="project" value="InterPro"/>
</dbReference>
<dbReference type="GO" id="GO:0090307">
    <property type="term" value="P:mitotic spindle assembly"/>
    <property type="evidence" value="ECO:0000318"/>
    <property type="project" value="GO_Central"/>
</dbReference>
<dbReference type="GO" id="GO:0051231">
    <property type="term" value="P:spindle elongation"/>
    <property type="evidence" value="ECO:0000318"/>
    <property type="project" value="GO_Central"/>
</dbReference>
<dbReference type="CDD" id="cd01364">
    <property type="entry name" value="KISc_BimC_Eg5"/>
    <property type="match status" value="1"/>
</dbReference>
<dbReference type="FunFam" id="3.40.850.10:FF:000019">
    <property type="entry name" value="Kinesin-like protein KIN-5D"/>
    <property type="match status" value="1"/>
</dbReference>
<dbReference type="Gene3D" id="3.40.850.10">
    <property type="entry name" value="Kinesin motor domain"/>
    <property type="match status" value="1"/>
</dbReference>
<dbReference type="InterPro" id="IPR047149">
    <property type="entry name" value="KIF11-like"/>
</dbReference>
<dbReference type="InterPro" id="IPR047241">
    <property type="entry name" value="KIF11-like_kin_motor_dom"/>
</dbReference>
<dbReference type="InterPro" id="IPR019821">
    <property type="entry name" value="Kinesin_motor_CS"/>
</dbReference>
<dbReference type="InterPro" id="IPR001752">
    <property type="entry name" value="Kinesin_motor_dom"/>
</dbReference>
<dbReference type="InterPro" id="IPR036961">
    <property type="entry name" value="Kinesin_motor_dom_sf"/>
</dbReference>
<dbReference type="InterPro" id="IPR027417">
    <property type="entry name" value="P-loop_NTPase"/>
</dbReference>
<dbReference type="PANTHER" id="PTHR47970:SF12">
    <property type="entry name" value="KINESIN FAMILY MEMBER 11"/>
    <property type="match status" value="1"/>
</dbReference>
<dbReference type="PANTHER" id="PTHR47970">
    <property type="entry name" value="KINESIN-LIKE PROTEIN KIF11"/>
    <property type="match status" value="1"/>
</dbReference>
<dbReference type="Pfam" id="PF00225">
    <property type="entry name" value="Kinesin"/>
    <property type="match status" value="1"/>
</dbReference>
<dbReference type="PRINTS" id="PR00380">
    <property type="entry name" value="KINESINHEAVY"/>
</dbReference>
<dbReference type="SMART" id="SM00129">
    <property type="entry name" value="KISc"/>
    <property type="match status" value="1"/>
</dbReference>
<dbReference type="SUPFAM" id="SSF52540">
    <property type="entry name" value="P-loop containing nucleoside triphosphate hydrolases"/>
    <property type="match status" value="1"/>
</dbReference>
<dbReference type="PROSITE" id="PS00411">
    <property type="entry name" value="KINESIN_MOTOR_1"/>
    <property type="match status" value="1"/>
</dbReference>
<dbReference type="PROSITE" id="PS50067">
    <property type="entry name" value="KINESIN_MOTOR_2"/>
    <property type="match status" value="1"/>
</dbReference>
<feature type="chain" id="PRO_0000125377" description="Kinesin-like protein KIN-5C">
    <location>
        <begin position="1"/>
        <end position="1006"/>
    </location>
</feature>
<feature type="domain" description="Kinesin motor" evidence="3">
    <location>
        <begin position="9"/>
        <end position="355"/>
    </location>
</feature>
<feature type="coiled-coil region" evidence="2">
    <location>
        <begin position="371"/>
        <end position="522"/>
    </location>
</feature>
<feature type="binding site" evidence="3">
    <location>
        <begin position="95"/>
        <end position="102"/>
    </location>
    <ligand>
        <name>ATP</name>
        <dbReference type="ChEBI" id="CHEBI:30616"/>
    </ligand>
</feature>
<feature type="sequence conflict" description="In Ref. 1; AA sequence." evidence="7" ref="1">
    <original>T</original>
    <variation>Q</variation>
    <location>
        <position position="150"/>
    </location>
</feature>
<feature type="sequence conflict" description="In Ref. 1; AA sequence." evidence="7" ref="1">
    <original>E</original>
    <variation>F</variation>
    <location>
        <position position="153"/>
    </location>
</feature>
<feature type="sequence conflict" description="In Ref. 1; AA sequence." evidence="7" ref="1">
    <original>D</original>
    <variation>Q</variation>
    <location>
        <position position="161"/>
    </location>
</feature>
<protein>
    <recommendedName>
        <fullName evidence="7">Kinesin-like protein KIN-5C</fullName>
    </recommendedName>
    <alternativeName>
        <fullName>125 kDa kinesin-related protein</fullName>
    </alternativeName>
</protein>
<gene>
    <name evidence="7" type="primary">KIN5C</name>
    <name evidence="6" type="synonym">TKRP125</name>
</gene>
<proteinExistence type="evidence at protein level"/>
<accession>O23826</accession>
<keyword id="KW-0067">ATP-binding</keyword>
<keyword id="KW-0175">Coiled coil</keyword>
<keyword id="KW-0963">Cytoplasm</keyword>
<keyword id="KW-0206">Cytoskeleton</keyword>
<keyword id="KW-0903">Direct protein sequencing</keyword>
<keyword id="KW-0493">Microtubule</keyword>
<keyword id="KW-0505">Motor protein</keyword>
<keyword id="KW-0547">Nucleotide-binding</keyword>
<keyword id="KW-1185">Reference proteome</keyword>
<sequence>MSNKEKGVNVQVLLRCRPFSNDELRNNAPQVVTCNDYQREVAVSQNIAGKHIDRIFTFDKVFGPSAQQRDLYDQAIVPIVNEVLEGFNCTIFAYGQTGTGKTYTMEGECKRSKSGPNGELPQEAGVIPRAVKQVFDTLESQNAEYSVKVTFLELYNEEITDLLAPEDLKVALEDRQKKQLPLMEDGKGGVLVRGLEEEIVTSANEIFTLLERGSAKRRTAETLLNKQSSRSHSLFSITIHIKEATPEGEELIKCGKLNLVDLAGSENISRSGAREGRAREAGEINKSLLTLGRVINALVEHLGHIPYRDSKLTRLLRDSLGGRTKTCIIATVSPAVHCLEETLSTLDYAHRAKNIKNKPEVNQKMMKSTLIKDLYGEIERLKAEVYAAREKNGVYIPKERYYQEENERKAMADQIEQMGVSIENHQKQFEELQSRHDSQVQQCSDLTCKLDVTQKQLNQTSKLLAYTEEQLRQSQYTLKERDFIISEQKKAENALAHQACVLRADLEKSIQENASLFQKIAREDKLSTDNRSLVNNFQAELAKQLGSLSSTLATSVCRQTEHLQCVEKFCHNFLDSHDKAVLDLKRKINSSMALYISHFEAMQNVVRLHKATSNATLEEVSTLASSNSISTKEFLDAEAVEANSMFDELQSTLSTHQGEMAHFARELRQRFNDSTEHLTNISAIIQRFFDKLLDESKRLEKHATTVDEIQTNSIAEFEKAYEEQSKSDAEKLIADVTSLVSNHMRRQKELVGARLVDLRETVSGNRTFLDGHVSSMEGITTDAKRKWQDFYMQAEGETKENADFSAAKHCRMESLMQKCVSTAETALKRWQSTHELVNDMGNQHVLTMHSVVRNICDNNEQHVTDFDSTRESAEEDVKRNSEDIIKSIDSLSGEERGSISGVLDTTSAHSETLDVLKKDHCMQSTSIEQIALETFQQKYMDYEPTGATPIRSEPDVPSKVTIESLRAMPMEVLLEEFRENNSFESFQVKEVKPSLIPRSPFSQINN</sequence>
<evidence type="ECO:0000250" key="1">
    <source>
        <dbReference type="UniProtKB" id="F4IIS5"/>
    </source>
</evidence>
<evidence type="ECO:0000255" key="2"/>
<evidence type="ECO:0000255" key="3">
    <source>
        <dbReference type="PROSITE-ProRule" id="PRU00283"/>
    </source>
</evidence>
<evidence type="ECO:0000269" key="4">
    <source>
    </source>
</evidence>
<evidence type="ECO:0000269" key="5">
    <source>
    </source>
</evidence>
<evidence type="ECO:0000303" key="6">
    <source>
    </source>
</evidence>
<evidence type="ECO:0000305" key="7"/>
<organism>
    <name type="scientific">Nicotiana tabacum</name>
    <name type="common">Common tobacco</name>
    <dbReference type="NCBI Taxonomy" id="4097"/>
    <lineage>
        <taxon>Eukaryota</taxon>
        <taxon>Viridiplantae</taxon>
        <taxon>Streptophyta</taxon>
        <taxon>Embryophyta</taxon>
        <taxon>Tracheophyta</taxon>
        <taxon>Spermatophyta</taxon>
        <taxon>Magnoliopsida</taxon>
        <taxon>eudicotyledons</taxon>
        <taxon>Gunneridae</taxon>
        <taxon>Pentapetalae</taxon>
        <taxon>asterids</taxon>
        <taxon>lamiids</taxon>
        <taxon>Solanales</taxon>
        <taxon>Solanaceae</taxon>
        <taxon>Nicotianoideae</taxon>
        <taxon>Nicotianeae</taxon>
        <taxon>Nicotiana</taxon>
    </lineage>
</organism>
<name>KN5C_TOBAC</name>
<comment type="function">
    <text evidence="1 4">Responsible for microtubule translocation. May be important for the organization of phragmoplast-specific arrays of microtubules (PubMed:7983184). Plays an essential role in stabilizing the mitotic spindle. Required during mitotic cytokinesis (By similarity).</text>
</comment>
<comment type="subcellular location">
    <subcellularLocation>
        <location evidence="5">Cytoplasm</location>
    </subcellularLocation>
    <subcellularLocation>
        <location evidence="5">Cytoplasm</location>
        <location evidence="5">Cytoskeleton</location>
    </subcellularLocation>
    <subcellularLocation>
        <location evidence="5">Cytoplasm</location>
        <location evidence="5">Cytoskeleton</location>
        <location evidence="5">Spindle</location>
    </subcellularLocation>
    <text evidence="5">Microtubule-associated.</text>
</comment>
<comment type="developmental stage">
    <text>Expressed during S phase. Expression increases as cell moves from S phase to M phase and then decreases rapidly as cell enters the G1 phase. Expression increases again during the G2 phase.</text>
</comment>
<comment type="similarity">
    <text evidence="7">Belongs to the TRAFAC class myosin-kinesin ATPase superfamily. Kinesin family. KIN-5/BimC subfamily.</text>
</comment>
<reference key="1">
    <citation type="journal article" date="1997" name="J. Cell Sci.">
        <title>TKRP125, a kinesin-related protein involved in the centrosome-independent organization of the cytokinetic apparatus in tobacco BY-2 cells.</title>
        <authorList>
            <person name="Asada T."/>
            <person name="Kuriyama R."/>
            <person name="Shibaoka H."/>
        </authorList>
    </citation>
    <scope>NUCLEOTIDE SEQUENCE [MRNA]</scope>
    <scope>PROTEIN SEQUENCE OF 149-163 AND 194-211</scope>
    <scope>CHARACTERIZATION</scope>
    <scope>SUBCELLULAR LOCATION</scope>
    <source>
        <strain>cv. Bright Yellow 2</strain>
    </source>
</reference>
<reference key="2">
    <citation type="journal article" date="1994" name="J. Cell Sci.">
        <title>Isolation of polypeptides with microtubule-translocating activity from phragmoplasts of tobacco BY-2 cells.</title>
        <authorList>
            <person name="Asada T."/>
            <person name="Shibaoka H."/>
        </authorList>
    </citation>
    <scope>FUNCTION</scope>
    <source>
        <strain>cv. Bright Yellow 2</strain>
    </source>
</reference>
<reference key="3">
    <citation type="journal article" date="2006" name="Trends Plant Sci.">
        <title>Mitosis-specific kinesins in Arabidopsis.</title>
        <authorList>
            <person name="Vanstraelen M."/>
            <person name="Inze D."/>
            <person name="Geelen D."/>
        </authorList>
    </citation>
    <scope>REVIEW</scope>
</reference>